<organism>
    <name type="scientific">Escherichia coli (strain SE11)</name>
    <dbReference type="NCBI Taxonomy" id="409438"/>
    <lineage>
        <taxon>Bacteria</taxon>
        <taxon>Pseudomonadati</taxon>
        <taxon>Pseudomonadota</taxon>
        <taxon>Gammaproteobacteria</taxon>
        <taxon>Enterobacterales</taxon>
        <taxon>Enterobacteriaceae</taxon>
        <taxon>Escherichia</taxon>
    </lineage>
</organism>
<reference key="1">
    <citation type="journal article" date="2008" name="DNA Res.">
        <title>Complete genome sequence and comparative analysis of the wild-type commensal Escherichia coli strain SE11 isolated from a healthy adult.</title>
        <authorList>
            <person name="Oshima K."/>
            <person name="Toh H."/>
            <person name="Ogura Y."/>
            <person name="Sasamoto H."/>
            <person name="Morita H."/>
            <person name="Park S.-H."/>
            <person name="Ooka T."/>
            <person name="Iyoda S."/>
            <person name="Taylor T.D."/>
            <person name="Hayashi T."/>
            <person name="Itoh K."/>
            <person name="Hattori M."/>
        </authorList>
    </citation>
    <scope>NUCLEOTIDE SEQUENCE [LARGE SCALE GENOMIC DNA]</scope>
    <source>
        <strain>SE11</strain>
    </source>
</reference>
<gene>
    <name evidence="1" type="primary">cof</name>
    <name type="ordered locus">ECSE_0472</name>
</gene>
<dbReference type="EC" id="3.6.1.-" evidence="1"/>
<dbReference type="EMBL" id="AP009240">
    <property type="protein sequence ID" value="BAG75996.1"/>
    <property type="molecule type" value="Genomic_DNA"/>
</dbReference>
<dbReference type="RefSeq" id="WP_000113027.1">
    <property type="nucleotide sequence ID" value="NC_011415.1"/>
</dbReference>
<dbReference type="SMR" id="B6HZQ3"/>
<dbReference type="GeneID" id="93777004"/>
<dbReference type="KEGG" id="ecy:ECSE_0472"/>
<dbReference type="HOGENOM" id="CLU_044146_5_2_6"/>
<dbReference type="Proteomes" id="UP000008199">
    <property type="component" value="Chromosome"/>
</dbReference>
<dbReference type="GO" id="GO:0002145">
    <property type="term" value="F:4-amino-5-hydroxymethyl-2-methylpyrimidine diphosphatase activity"/>
    <property type="evidence" value="ECO:0007669"/>
    <property type="project" value="RHEA"/>
</dbReference>
<dbReference type="GO" id="GO:0000287">
    <property type="term" value="F:magnesium ion binding"/>
    <property type="evidence" value="ECO:0000250"/>
    <property type="project" value="UniProtKB"/>
</dbReference>
<dbReference type="GO" id="GO:0016791">
    <property type="term" value="F:phosphatase activity"/>
    <property type="evidence" value="ECO:0000250"/>
    <property type="project" value="UniProtKB"/>
</dbReference>
<dbReference type="CDD" id="cd07516">
    <property type="entry name" value="HAD_Pase"/>
    <property type="match status" value="1"/>
</dbReference>
<dbReference type="FunFam" id="3.30.1240.10:FF:000002">
    <property type="entry name" value="HMP-PP phosphatase"/>
    <property type="match status" value="1"/>
</dbReference>
<dbReference type="Gene3D" id="3.30.1240.10">
    <property type="match status" value="1"/>
</dbReference>
<dbReference type="Gene3D" id="3.40.50.1000">
    <property type="entry name" value="HAD superfamily/HAD-like"/>
    <property type="match status" value="1"/>
</dbReference>
<dbReference type="HAMAP" id="MF_01847">
    <property type="entry name" value="HMP_PP_phosphat"/>
    <property type="match status" value="1"/>
</dbReference>
<dbReference type="InterPro" id="IPR000150">
    <property type="entry name" value="Cof"/>
</dbReference>
<dbReference type="InterPro" id="IPR036412">
    <property type="entry name" value="HAD-like_sf"/>
</dbReference>
<dbReference type="InterPro" id="IPR006379">
    <property type="entry name" value="HAD-SF_hydro_IIB"/>
</dbReference>
<dbReference type="InterPro" id="IPR023214">
    <property type="entry name" value="HAD_sf"/>
</dbReference>
<dbReference type="InterPro" id="IPR023938">
    <property type="entry name" value="HMP-PP_phosphatase"/>
</dbReference>
<dbReference type="NCBIfam" id="TIGR00099">
    <property type="entry name" value="Cof-subfamily"/>
    <property type="match status" value="1"/>
</dbReference>
<dbReference type="NCBIfam" id="TIGR01484">
    <property type="entry name" value="HAD-SF-IIB"/>
    <property type="match status" value="1"/>
</dbReference>
<dbReference type="NCBIfam" id="NF011705">
    <property type="entry name" value="PRK15126.1"/>
    <property type="match status" value="1"/>
</dbReference>
<dbReference type="PANTHER" id="PTHR47267">
    <property type="match status" value="1"/>
</dbReference>
<dbReference type="PANTHER" id="PTHR47267:SF2">
    <property type="entry name" value="HMP-PP PHOSPHATASE"/>
    <property type="match status" value="1"/>
</dbReference>
<dbReference type="Pfam" id="PF08282">
    <property type="entry name" value="Hydrolase_3"/>
    <property type="match status" value="1"/>
</dbReference>
<dbReference type="SFLD" id="SFLDG01140">
    <property type="entry name" value="C2.B:_Phosphomannomutase_and_P"/>
    <property type="match status" value="1"/>
</dbReference>
<dbReference type="SFLD" id="SFLDS00003">
    <property type="entry name" value="Haloacid_Dehalogenase"/>
    <property type="match status" value="1"/>
</dbReference>
<dbReference type="SUPFAM" id="SSF56784">
    <property type="entry name" value="HAD-like"/>
    <property type="match status" value="1"/>
</dbReference>
<dbReference type="PROSITE" id="PS01228">
    <property type="entry name" value="COF_1"/>
    <property type="match status" value="1"/>
</dbReference>
<dbReference type="PROSITE" id="PS01229">
    <property type="entry name" value="COF_2"/>
    <property type="match status" value="1"/>
</dbReference>
<proteinExistence type="inferred from homology"/>
<evidence type="ECO:0000255" key="1">
    <source>
        <dbReference type="HAMAP-Rule" id="MF_01847"/>
    </source>
</evidence>
<accession>B6HZQ3</accession>
<feature type="chain" id="PRO_1000188503" description="HMP-PP phosphatase">
    <location>
        <begin position="1"/>
        <end position="272"/>
    </location>
</feature>
<feature type="active site" description="Nucleophile" evidence="1">
    <location>
        <position position="8"/>
    </location>
</feature>
<feature type="binding site" evidence="1">
    <location>
        <position position="8"/>
    </location>
    <ligand>
        <name>Mg(2+)</name>
        <dbReference type="ChEBI" id="CHEBI:18420"/>
    </ligand>
</feature>
<feature type="binding site" evidence="1">
    <location>
        <position position="10"/>
    </location>
    <ligand>
        <name>Mg(2+)</name>
        <dbReference type="ChEBI" id="CHEBI:18420"/>
    </ligand>
</feature>
<feature type="binding site" evidence="1">
    <location>
        <position position="212"/>
    </location>
    <ligand>
        <name>Mg(2+)</name>
        <dbReference type="ChEBI" id="CHEBI:18420"/>
    </ligand>
</feature>
<sequence length="272" mass="30329">MARLAAFDMDGTLLMPDHHLGEKTLSTLARLRERDITLTFATGRHALEMQHILGALSLDAYLITGNGTRVHSLEGELLHRDDLPADVAELVLYQQWDTRASMHIFNDDGWFTGKEIPALLQAFVYSGFRYQIIDVKKMPLGSVTKICFCGDHDDLTRLQIQLYEALGERAHLCFSATDCLEVLPVGCNKGAALTVLTQHLGLSLRDCMAFGDAMNDREMLGSVGSGFIMGNAMPQLRAELPHLPVIGHCRNQAVSHYLTHWLDYPHLPYSPE</sequence>
<protein>
    <recommendedName>
        <fullName evidence="1">HMP-PP phosphatase</fullName>
        <ecNumber evidence="1">3.6.1.-</ecNumber>
    </recommendedName>
</protein>
<name>COF_ECOSE</name>
<keyword id="KW-0378">Hydrolase</keyword>
<keyword id="KW-0460">Magnesium</keyword>
<keyword id="KW-0479">Metal-binding</keyword>
<comment type="function">
    <text evidence="1">Catalyzes the hydrolysis of 4-amino-2-methyl-5-hydroxymethylpyrimidine pyrophosphate (HMP-PP) to 4-amino-2-methyl-5-hydroxymethylpyrimidine phosphate (HMP-P).</text>
</comment>
<comment type="catalytic activity">
    <reaction evidence="1">
        <text>4-amino-2-methyl-5-(diphosphooxymethyl)pyrimidine + H2O = 4-amino-2-methyl-5-(phosphooxymethyl)pyrimidine + phosphate + H(+)</text>
        <dbReference type="Rhea" id="RHEA:27914"/>
        <dbReference type="ChEBI" id="CHEBI:15377"/>
        <dbReference type="ChEBI" id="CHEBI:15378"/>
        <dbReference type="ChEBI" id="CHEBI:43474"/>
        <dbReference type="ChEBI" id="CHEBI:57841"/>
        <dbReference type="ChEBI" id="CHEBI:58354"/>
    </reaction>
</comment>
<comment type="cofactor">
    <cofactor evidence="1">
        <name>Mg(2+)</name>
        <dbReference type="ChEBI" id="CHEBI:18420"/>
    </cofactor>
</comment>
<comment type="similarity">
    <text evidence="1">Belongs to the HAD-like hydrolase superfamily. Cof family.</text>
</comment>